<keyword id="KW-0045">Antibiotic biosynthesis</keyword>
<keyword id="KW-0238">DNA-binding</keyword>
<keyword id="KW-0804">Transcription</keyword>
<keyword id="KW-0805">Transcription regulation</keyword>
<gene>
    <name type="primary">brpA</name>
</gene>
<proteinExistence type="predicted"/>
<comment type="function">
    <text>Involved in the regulation of the biosynthesis of phosphinothricin tripeptide (PTT), also known as bialaphos (BA), a natural-product antibiotic and potent herbicide.</text>
</comment>
<accession>Q01108</accession>
<evidence type="ECO:0000255" key="1">
    <source>
        <dbReference type="PROSITE-ProRule" id="PRU00411"/>
    </source>
</evidence>
<feature type="chain" id="PRO_0000184141" description="Bialaphos biosynthetic pathway regulatory protein">
    <location>
        <begin position="1"/>
        <end position="256"/>
    </location>
</feature>
<feature type="domain" description="HTH luxR-type" evidence="1">
    <location>
        <begin position="184"/>
        <end position="249"/>
    </location>
</feature>
<feature type="DNA-binding region" description="H-T-H motif" evidence="1">
    <location>
        <begin position="208"/>
        <end position="227"/>
    </location>
</feature>
<organism>
    <name type="scientific">Streptomyces hygroscopicus</name>
    <dbReference type="NCBI Taxonomy" id="1912"/>
    <lineage>
        <taxon>Bacteria</taxon>
        <taxon>Bacillati</taxon>
        <taxon>Actinomycetota</taxon>
        <taxon>Actinomycetes</taxon>
        <taxon>Kitasatosporales</taxon>
        <taxon>Streptomycetaceae</taxon>
        <taxon>Streptomyces</taxon>
        <taxon>Streptomyces violaceusniger group</taxon>
    </lineage>
</organism>
<dbReference type="EMBL" id="M64783">
    <property type="protein sequence ID" value="AAA79281.1"/>
    <property type="molecule type" value="Genomic_DNA"/>
</dbReference>
<dbReference type="PIR" id="F47031">
    <property type="entry name" value="F47031"/>
</dbReference>
<dbReference type="SMR" id="Q01108"/>
<dbReference type="GO" id="GO:0003677">
    <property type="term" value="F:DNA binding"/>
    <property type="evidence" value="ECO:0007669"/>
    <property type="project" value="UniProtKB-KW"/>
</dbReference>
<dbReference type="GO" id="GO:0017000">
    <property type="term" value="P:antibiotic biosynthetic process"/>
    <property type="evidence" value="ECO:0007669"/>
    <property type="project" value="UniProtKB-KW"/>
</dbReference>
<dbReference type="GO" id="GO:0006355">
    <property type="term" value="P:regulation of DNA-templated transcription"/>
    <property type="evidence" value="ECO:0007669"/>
    <property type="project" value="InterPro"/>
</dbReference>
<dbReference type="CDD" id="cd06170">
    <property type="entry name" value="LuxR_C_like"/>
    <property type="match status" value="1"/>
</dbReference>
<dbReference type="Gene3D" id="1.10.10.10">
    <property type="entry name" value="Winged helix-like DNA-binding domain superfamily/Winged helix DNA-binding domain"/>
    <property type="match status" value="1"/>
</dbReference>
<dbReference type="InterPro" id="IPR016032">
    <property type="entry name" value="Sig_transdc_resp-reg_C-effctor"/>
</dbReference>
<dbReference type="InterPro" id="IPR000792">
    <property type="entry name" value="Tscrpt_reg_LuxR_C"/>
</dbReference>
<dbReference type="InterPro" id="IPR039420">
    <property type="entry name" value="WalR-like"/>
</dbReference>
<dbReference type="InterPro" id="IPR036388">
    <property type="entry name" value="WH-like_DNA-bd_sf"/>
</dbReference>
<dbReference type="PANTHER" id="PTHR43214:SF24">
    <property type="entry name" value="TRANSCRIPTIONAL REGULATORY PROTEIN NARL-RELATED"/>
    <property type="match status" value="1"/>
</dbReference>
<dbReference type="PANTHER" id="PTHR43214">
    <property type="entry name" value="TWO-COMPONENT RESPONSE REGULATOR"/>
    <property type="match status" value="1"/>
</dbReference>
<dbReference type="Pfam" id="PF00196">
    <property type="entry name" value="GerE"/>
    <property type="match status" value="1"/>
</dbReference>
<dbReference type="PRINTS" id="PR00038">
    <property type="entry name" value="HTHLUXR"/>
</dbReference>
<dbReference type="SMART" id="SM00421">
    <property type="entry name" value="HTH_LUXR"/>
    <property type="match status" value="1"/>
</dbReference>
<dbReference type="SUPFAM" id="SSF46894">
    <property type="entry name" value="C-terminal effector domain of the bipartite response regulators"/>
    <property type="match status" value="1"/>
</dbReference>
<dbReference type="PROSITE" id="PS50043">
    <property type="entry name" value="HTH_LUXR_2"/>
    <property type="match status" value="1"/>
</dbReference>
<name>BRPA_STRHY</name>
<protein>
    <recommendedName>
        <fullName>Bialaphos biosynthetic pathway regulatory protein</fullName>
    </recommendedName>
</protein>
<sequence>MTRLLSAHRKVVADQGRLLEALESALGELVRSSPSRTDCSSLEAEQCAVGCFAMDPLVAAEGEVLLCLDPADLEQERFSYLLECLHGAFLRGVTIRCICAESMINLPGGRSYIQELQTAGAEIRVAPLLPFRLMLVDRIFACVSVVDRHGENSTLEIRSPETCHFVHRVFDYCWVTRTSSKACETADAIDVSDREVIILRLLANGMKDVAMARSLGISTRTLRRVITDLMGKLGVSSRFQLGARAAECRLLWSVLS</sequence>
<reference key="1">
    <citation type="journal article" date="1991" name="J. Bacteriol.">
        <title>Nucleotide sequence analysis reveals linked N-acetyl hydrolase, thioesterase, transport, and regulatory genes encoded by the bialaphos biosynthetic gene cluster of Streptomyces hygroscopicus.</title>
        <authorList>
            <person name="Raibaud A."/>
            <person name="Zalacain M."/>
            <person name="Holt T.G."/>
            <person name="Tizard R."/>
            <person name="Thompson C.J."/>
        </authorList>
    </citation>
    <scope>NUCLEOTIDE SEQUENCE [GENOMIC DNA]</scope>
    <source>
        <strain>HP460</strain>
    </source>
</reference>